<dbReference type="EC" id="2.7.1.30" evidence="1"/>
<dbReference type="EMBL" id="BA000034">
    <property type="protein sequence ID" value="BAC63493.1"/>
    <property type="molecule type" value="Genomic_DNA"/>
</dbReference>
<dbReference type="RefSeq" id="WP_011054909.1">
    <property type="nucleotide sequence ID" value="NC_004606.1"/>
</dbReference>
<dbReference type="SMR" id="P0DA17"/>
<dbReference type="KEGG" id="sps:SPs0398"/>
<dbReference type="HOGENOM" id="CLU_009281_2_3_9"/>
<dbReference type="UniPathway" id="UPA00618">
    <property type="reaction ID" value="UER00672"/>
</dbReference>
<dbReference type="GO" id="GO:0005829">
    <property type="term" value="C:cytosol"/>
    <property type="evidence" value="ECO:0007669"/>
    <property type="project" value="TreeGrafter"/>
</dbReference>
<dbReference type="GO" id="GO:0005524">
    <property type="term" value="F:ATP binding"/>
    <property type="evidence" value="ECO:0007669"/>
    <property type="project" value="UniProtKB-UniRule"/>
</dbReference>
<dbReference type="GO" id="GO:0004370">
    <property type="term" value="F:glycerol kinase activity"/>
    <property type="evidence" value="ECO:0000250"/>
    <property type="project" value="UniProtKB"/>
</dbReference>
<dbReference type="GO" id="GO:0019563">
    <property type="term" value="P:glycerol catabolic process"/>
    <property type="evidence" value="ECO:0007669"/>
    <property type="project" value="UniProtKB-UniRule"/>
</dbReference>
<dbReference type="GO" id="GO:0006071">
    <property type="term" value="P:glycerol metabolic process"/>
    <property type="evidence" value="ECO:0000250"/>
    <property type="project" value="UniProtKB"/>
</dbReference>
<dbReference type="GO" id="GO:0006072">
    <property type="term" value="P:glycerol-3-phosphate metabolic process"/>
    <property type="evidence" value="ECO:0007669"/>
    <property type="project" value="InterPro"/>
</dbReference>
<dbReference type="CDD" id="cd07786">
    <property type="entry name" value="FGGY_EcGK_like"/>
    <property type="match status" value="1"/>
</dbReference>
<dbReference type="FunFam" id="3.30.420.40:FF:000007">
    <property type="entry name" value="Glycerol kinase"/>
    <property type="match status" value="1"/>
</dbReference>
<dbReference type="FunFam" id="3.30.420.40:FF:000008">
    <property type="entry name" value="Glycerol kinase"/>
    <property type="match status" value="1"/>
</dbReference>
<dbReference type="Gene3D" id="3.30.420.40">
    <property type="match status" value="2"/>
</dbReference>
<dbReference type="HAMAP" id="MF_00186">
    <property type="entry name" value="Glycerol_kin"/>
    <property type="match status" value="1"/>
</dbReference>
<dbReference type="InterPro" id="IPR043129">
    <property type="entry name" value="ATPase_NBD"/>
</dbReference>
<dbReference type="InterPro" id="IPR000577">
    <property type="entry name" value="Carb_kinase_FGGY"/>
</dbReference>
<dbReference type="InterPro" id="IPR018483">
    <property type="entry name" value="Carb_kinase_FGGY_CS"/>
</dbReference>
<dbReference type="InterPro" id="IPR018485">
    <property type="entry name" value="FGGY_C"/>
</dbReference>
<dbReference type="InterPro" id="IPR018484">
    <property type="entry name" value="FGGY_N"/>
</dbReference>
<dbReference type="InterPro" id="IPR005999">
    <property type="entry name" value="Glycerol_kin"/>
</dbReference>
<dbReference type="NCBIfam" id="TIGR01311">
    <property type="entry name" value="glycerol_kin"/>
    <property type="match status" value="1"/>
</dbReference>
<dbReference type="NCBIfam" id="NF000756">
    <property type="entry name" value="PRK00047.1"/>
    <property type="match status" value="1"/>
</dbReference>
<dbReference type="PANTHER" id="PTHR10196:SF69">
    <property type="entry name" value="GLYCEROL KINASE"/>
    <property type="match status" value="1"/>
</dbReference>
<dbReference type="PANTHER" id="PTHR10196">
    <property type="entry name" value="SUGAR KINASE"/>
    <property type="match status" value="1"/>
</dbReference>
<dbReference type="Pfam" id="PF02782">
    <property type="entry name" value="FGGY_C"/>
    <property type="match status" value="1"/>
</dbReference>
<dbReference type="Pfam" id="PF00370">
    <property type="entry name" value="FGGY_N"/>
    <property type="match status" value="1"/>
</dbReference>
<dbReference type="PIRSF" id="PIRSF000538">
    <property type="entry name" value="GlpK"/>
    <property type="match status" value="1"/>
</dbReference>
<dbReference type="SUPFAM" id="SSF53067">
    <property type="entry name" value="Actin-like ATPase domain"/>
    <property type="match status" value="2"/>
</dbReference>
<dbReference type="PROSITE" id="PS00933">
    <property type="entry name" value="FGGY_KINASES_1"/>
    <property type="match status" value="1"/>
</dbReference>
<dbReference type="PROSITE" id="PS00445">
    <property type="entry name" value="FGGY_KINASES_2"/>
    <property type="match status" value="1"/>
</dbReference>
<organism>
    <name type="scientific">Streptococcus pyogenes serotype M3 (strain SSI-1)</name>
    <dbReference type="NCBI Taxonomy" id="193567"/>
    <lineage>
        <taxon>Bacteria</taxon>
        <taxon>Bacillati</taxon>
        <taxon>Bacillota</taxon>
        <taxon>Bacilli</taxon>
        <taxon>Lactobacillales</taxon>
        <taxon>Streptococcaceae</taxon>
        <taxon>Streptococcus</taxon>
    </lineage>
</organism>
<keyword id="KW-0067">ATP-binding</keyword>
<keyword id="KW-0319">Glycerol metabolism</keyword>
<keyword id="KW-0418">Kinase</keyword>
<keyword id="KW-0547">Nucleotide-binding</keyword>
<keyword id="KW-0597">Phosphoprotein</keyword>
<keyword id="KW-0808">Transferase</keyword>
<comment type="function">
    <text evidence="1">Key enzyme in the regulation of glycerol uptake and metabolism. Catalyzes the phosphorylation of glycerol to yield sn-glycerol 3-phosphate.</text>
</comment>
<comment type="catalytic activity">
    <reaction evidence="1">
        <text>glycerol + ATP = sn-glycerol 3-phosphate + ADP + H(+)</text>
        <dbReference type="Rhea" id="RHEA:21644"/>
        <dbReference type="ChEBI" id="CHEBI:15378"/>
        <dbReference type="ChEBI" id="CHEBI:17754"/>
        <dbReference type="ChEBI" id="CHEBI:30616"/>
        <dbReference type="ChEBI" id="CHEBI:57597"/>
        <dbReference type="ChEBI" id="CHEBI:456216"/>
        <dbReference type="EC" id="2.7.1.30"/>
    </reaction>
</comment>
<comment type="activity regulation">
    <text evidence="1">Activated by phosphorylation and inhibited by fructose 1,6-bisphosphate (FBP).</text>
</comment>
<comment type="pathway">
    <text evidence="1">Polyol metabolism; glycerol degradation via glycerol kinase pathway; sn-glycerol 3-phosphate from glycerol: step 1/1.</text>
</comment>
<comment type="subunit">
    <text evidence="1">Homotetramer and homodimer (in equilibrium).</text>
</comment>
<comment type="PTM">
    <text evidence="1">The phosphoenolpyruvate-dependent sugar phosphotransferase system (PTS), including enzyme I, and histidine-containing protein (HPr) are required for the phosphorylation, which leads to the activation of the enzyme.</text>
</comment>
<comment type="similarity">
    <text evidence="1">Belongs to the FGGY kinase family.</text>
</comment>
<reference key="1">
    <citation type="journal article" date="2003" name="Genome Res.">
        <title>Genome sequence of an M3 strain of Streptococcus pyogenes reveals a large-scale genomic rearrangement in invasive strains and new insights into phage evolution.</title>
        <authorList>
            <person name="Nakagawa I."/>
            <person name="Kurokawa K."/>
            <person name="Yamashita A."/>
            <person name="Nakata M."/>
            <person name="Tomiyasu Y."/>
            <person name="Okahashi N."/>
            <person name="Kawabata S."/>
            <person name="Yamazaki K."/>
            <person name="Shiba T."/>
            <person name="Yasunaga T."/>
            <person name="Hayashi H."/>
            <person name="Hattori M."/>
            <person name="Hamada S."/>
        </authorList>
    </citation>
    <scope>NUCLEOTIDE SEQUENCE [LARGE SCALE GENOMIC DNA]</scope>
    <source>
        <strain>SSI-1</strain>
    </source>
</reference>
<gene>
    <name evidence="1" type="primary">glpK</name>
    <name type="ordered locus">SPs0398</name>
</gene>
<accession>P0DA17</accession>
<accession>Q8K665</accession>
<evidence type="ECO:0000255" key="1">
    <source>
        <dbReference type="HAMAP-Rule" id="MF_00186"/>
    </source>
</evidence>
<proteinExistence type="inferred from homology"/>
<protein>
    <recommendedName>
        <fullName evidence="1">Glycerol kinase</fullName>
        <ecNumber evidence="1">2.7.1.30</ecNumber>
    </recommendedName>
    <alternativeName>
        <fullName evidence="1">ATP:glycerol 3-phosphotransferase</fullName>
    </alternativeName>
    <alternativeName>
        <fullName evidence="1">Glycerokinase</fullName>
        <shortName evidence="1">GK</shortName>
    </alternativeName>
</protein>
<sequence length="508" mass="56067">MSQEKYIMAIDQGTTSSRAIIFNQKGEKVSSSQKEFPQIFPHAGWVEHNANQIWNSVQSVIAGAFIESSIKPSQIEAIGITNQRETTVIWDKKTGVPIYNAIVWQSRQTAPIAEQLKQDGHTKMIHEKTGLVIDAYFSATKIRWILDHVPGAQERAEKGELLFGTIDTWLVWKLTDGAVHVTDYSNAARTMLYNIKDLTWDDEILELLNIPKDMLPEVKSNSEIYGKTAAFHFYGGEVPISGMAGDQQAALFGQLAFEPGMVKNTYGTGSFIIMNTGDEMQLSSNNLLTTIGYGINGKVHYALEGSIFIAGSAIQWLRDGLKMIETSPESEQFALASTSDDEVYVVPAFTGLGAPYWDSNARGSVFGLTRGTSKEDFVKATLQSIAYQVRDVIDTMQVDSGIDIQQLRVDGGAAMNNMLMQFQADILGIDIARAKNLETTALGAAFLAGLAVGYWEDMDALKELNATGQLFKASMNESRKEKLYKGWKRAVKATQVFTQEEDADDDAK</sequence>
<feature type="chain" id="PRO_0000411296" description="Glycerol kinase">
    <location>
        <begin position="1"/>
        <end position="508"/>
    </location>
</feature>
<feature type="binding site" evidence="1">
    <location>
        <position position="14"/>
    </location>
    <ligand>
        <name>ADP</name>
        <dbReference type="ChEBI" id="CHEBI:456216"/>
    </ligand>
</feature>
<feature type="binding site" evidence="1">
    <location>
        <position position="14"/>
    </location>
    <ligand>
        <name>ATP</name>
        <dbReference type="ChEBI" id="CHEBI:30616"/>
    </ligand>
</feature>
<feature type="binding site" evidence="1">
    <location>
        <position position="14"/>
    </location>
    <ligand>
        <name>sn-glycerol 3-phosphate</name>
        <dbReference type="ChEBI" id="CHEBI:57597"/>
    </ligand>
</feature>
<feature type="binding site" evidence="1">
    <location>
        <position position="15"/>
    </location>
    <ligand>
        <name>ATP</name>
        <dbReference type="ChEBI" id="CHEBI:30616"/>
    </ligand>
</feature>
<feature type="binding site" evidence="1">
    <location>
        <position position="16"/>
    </location>
    <ligand>
        <name>ATP</name>
        <dbReference type="ChEBI" id="CHEBI:30616"/>
    </ligand>
</feature>
<feature type="binding site" evidence="1">
    <location>
        <position position="18"/>
    </location>
    <ligand>
        <name>ADP</name>
        <dbReference type="ChEBI" id="CHEBI:456216"/>
    </ligand>
</feature>
<feature type="binding site" evidence="1">
    <location>
        <position position="84"/>
    </location>
    <ligand>
        <name>glycerol</name>
        <dbReference type="ChEBI" id="CHEBI:17754"/>
    </ligand>
</feature>
<feature type="binding site" evidence="1">
    <location>
        <position position="84"/>
    </location>
    <ligand>
        <name>sn-glycerol 3-phosphate</name>
        <dbReference type="ChEBI" id="CHEBI:57597"/>
    </ligand>
</feature>
<feature type="binding site" evidence="1">
    <location>
        <position position="85"/>
    </location>
    <ligand>
        <name>glycerol</name>
        <dbReference type="ChEBI" id="CHEBI:17754"/>
    </ligand>
</feature>
<feature type="binding site" evidence="1">
    <location>
        <position position="85"/>
    </location>
    <ligand>
        <name>sn-glycerol 3-phosphate</name>
        <dbReference type="ChEBI" id="CHEBI:57597"/>
    </ligand>
</feature>
<feature type="binding site" evidence="1">
    <location>
        <position position="136"/>
    </location>
    <ligand>
        <name>glycerol</name>
        <dbReference type="ChEBI" id="CHEBI:17754"/>
    </ligand>
</feature>
<feature type="binding site" evidence="1">
    <location>
        <position position="136"/>
    </location>
    <ligand>
        <name>sn-glycerol 3-phosphate</name>
        <dbReference type="ChEBI" id="CHEBI:57597"/>
    </ligand>
</feature>
<feature type="binding site" evidence="1">
    <location>
        <position position="246"/>
    </location>
    <ligand>
        <name>glycerol</name>
        <dbReference type="ChEBI" id="CHEBI:17754"/>
    </ligand>
</feature>
<feature type="binding site" evidence="1">
    <location>
        <position position="246"/>
    </location>
    <ligand>
        <name>sn-glycerol 3-phosphate</name>
        <dbReference type="ChEBI" id="CHEBI:57597"/>
    </ligand>
</feature>
<feature type="binding site" evidence="1">
    <location>
        <position position="247"/>
    </location>
    <ligand>
        <name>glycerol</name>
        <dbReference type="ChEBI" id="CHEBI:17754"/>
    </ligand>
</feature>
<feature type="binding site" evidence="1">
    <location>
        <position position="268"/>
    </location>
    <ligand>
        <name>ADP</name>
        <dbReference type="ChEBI" id="CHEBI:456216"/>
    </ligand>
</feature>
<feature type="binding site" evidence="1">
    <location>
        <position position="268"/>
    </location>
    <ligand>
        <name>ATP</name>
        <dbReference type="ChEBI" id="CHEBI:30616"/>
    </ligand>
</feature>
<feature type="binding site" evidence="1">
    <location>
        <position position="311"/>
    </location>
    <ligand>
        <name>ADP</name>
        <dbReference type="ChEBI" id="CHEBI:456216"/>
    </ligand>
</feature>
<feature type="binding site" evidence="1">
    <location>
        <position position="311"/>
    </location>
    <ligand>
        <name>ATP</name>
        <dbReference type="ChEBI" id="CHEBI:30616"/>
    </ligand>
</feature>
<feature type="binding site" evidence="1">
    <location>
        <position position="315"/>
    </location>
    <ligand>
        <name>ATP</name>
        <dbReference type="ChEBI" id="CHEBI:30616"/>
    </ligand>
</feature>
<feature type="binding site" evidence="1">
    <location>
        <position position="412"/>
    </location>
    <ligand>
        <name>ADP</name>
        <dbReference type="ChEBI" id="CHEBI:456216"/>
    </ligand>
</feature>
<feature type="binding site" evidence="1">
    <location>
        <position position="412"/>
    </location>
    <ligand>
        <name>ATP</name>
        <dbReference type="ChEBI" id="CHEBI:30616"/>
    </ligand>
</feature>
<feature type="binding site" evidence="1">
    <location>
        <position position="416"/>
    </location>
    <ligand>
        <name>ADP</name>
        <dbReference type="ChEBI" id="CHEBI:456216"/>
    </ligand>
</feature>
<feature type="modified residue" description="Phosphohistidine; by HPr" evidence="1">
    <location>
        <position position="232"/>
    </location>
</feature>
<name>GLPK_STRPQ</name>